<organism>
    <name type="scientific">Xenopus tropicalis</name>
    <name type="common">Western clawed frog</name>
    <name type="synonym">Silurana tropicalis</name>
    <dbReference type="NCBI Taxonomy" id="8364"/>
    <lineage>
        <taxon>Eukaryota</taxon>
        <taxon>Metazoa</taxon>
        <taxon>Chordata</taxon>
        <taxon>Craniata</taxon>
        <taxon>Vertebrata</taxon>
        <taxon>Euteleostomi</taxon>
        <taxon>Amphibia</taxon>
        <taxon>Batrachia</taxon>
        <taxon>Anura</taxon>
        <taxon>Pipoidea</taxon>
        <taxon>Pipidae</taxon>
        <taxon>Xenopodinae</taxon>
        <taxon>Xenopus</taxon>
        <taxon>Silurana</taxon>
    </lineage>
</organism>
<accession>Q6NVL6</accession>
<evidence type="ECO:0000250" key="1">
    <source>
        <dbReference type="UniProtKB" id="P70060"/>
    </source>
</evidence>
<evidence type="ECO:0000250" key="2">
    <source>
        <dbReference type="UniProtKB" id="P70662"/>
    </source>
</evidence>
<evidence type="ECO:0000255" key="3"/>
<evidence type="ECO:0000255" key="4">
    <source>
        <dbReference type="PROSITE-ProRule" id="PRU01302"/>
    </source>
</evidence>
<evidence type="ECO:0000256" key="5">
    <source>
        <dbReference type="SAM" id="MobiDB-lite"/>
    </source>
</evidence>
<evidence type="ECO:0000305" key="6"/>
<evidence type="ECO:0000312" key="7">
    <source>
        <dbReference type="EMBL" id="AAH67989.1"/>
    </source>
</evidence>
<reference evidence="7" key="1">
    <citation type="submission" date="2004-03" db="EMBL/GenBank/DDBJ databases">
        <authorList>
            <consortium name="NIH - Xenopus Gene Collection (XGC) project"/>
        </authorList>
    </citation>
    <scope>NUCLEOTIDE SEQUENCE [LARGE SCALE MRNA]</scope>
    <source>
        <tissue evidence="7">Gastrula</tissue>
    </source>
</reference>
<feature type="chain" id="PRO_0000284555" description="LIM domain-binding protein 1">
    <location>
        <begin position="1"/>
        <end position="373"/>
    </location>
</feature>
<feature type="domain" description="LIM interaction domain (LID)" evidence="4">
    <location>
        <begin position="298"/>
        <end position="337"/>
    </location>
</feature>
<feature type="region of interest" description="Disordered" evidence="5">
    <location>
        <begin position="248"/>
        <end position="297"/>
    </location>
</feature>
<feature type="region of interest" description="Disordered" evidence="5">
    <location>
        <begin position="329"/>
        <end position="373"/>
    </location>
</feature>
<feature type="compositionally biased region" description="Low complexity" evidence="5">
    <location>
        <begin position="266"/>
        <end position="282"/>
    </location>
</feature>
<feature type="compositionally biased region" description="Polar residues" evidence="5">
    <location>
        <begin position="288"/>
        <end position="297"/>
    </location>
</feature>
<name>LDB1_XENTR</name>
<sequence length="373" mass="42656">MLDRDVGPTPMYPPTYLEPGIGRHTPYGNQTDYRIFELNKRLQNWTEECDNLWWDAFTTEFFEDDAMLTITFCLEDGPKRYTIGRTLIPRYFRSIFEGGATELYYVLKHPKESFHNNFVSLDCDQCTMVTQHGKPMFTQVCVEGRLYLEFMFDDMMRIKTWHFSIRQHRELIPRSILAMHAQDPQMLDQLSKNITRCGLSNSTLNYLRLCVILEPMQELMSRHKTYSLSPRDCLKTCLFQKWQRMVAPPAEPARQAPNKRRKRKMSGGSTMSSGGGNTNNSNSKKKSPASTFALSSQDVMVVGEPTLMGGEFGDEDERLITRLENTQFDAANGIDDEDSFNNSPALGANSPWNSKPPSSQESKSENPTSQASQ</sequence>
<comment type="function">
    <text evidence="1 6">Binds to the LIM domain of a wide variety of LIM domain-containing transcription factors. Acts as a coactivator together with otx2 to stimulate lhx1/lim1-mediated activation of the gsc promoter in the Spemann organizer. Acts synergistically with lhx1/lim1 and ssbp in axis formation (By similarity).</text>
</comment>
<comment type="subunit">
    <text evidence="1">Forms homodimers and heterodimers. Interacts with and activates lhx1/lim1. The stoichiometry of lhx1/lim1 and ldb1 is important for their function and an excess of ldb1 can inhibit lhx1/lim1 function. When bound to lhx1/lim1, escapes degradation by rnf12. Interacts with the N-terminal region of rnf12 (By similarity).</text>
</comment>
<comment type="subcellular location">
    <subcellularLocation>
        <location evidence="6">Nucleus</location>
    </subcellularLocation>
</comment>
<comment type="domain">
    <text evidence="2">The dimerization domain is located in the N-terminus.</text>
</comment>
<comment type="PTM">
    <text evidence="1">Undergoes rnf12-mediated ubiquitin-proteasome-dependent degradation.</text>
</comment>
<comment type="similarity">
    <text evidence="3">Belongs to the LDB family.</text>
</comment>
<protein>
    <recommendedName>
        <fullName>LIM domain-binding protein 1</fullName>
        <shortName>LDB-1</shortName>
    </recommendedName>
</protein>
<gene>
    <name evidence="7" type="primary">ldb1</name>
</gene>
<dbReference type="EMBL" id="BC067989">
    <property type="protein sequence ID" value="AAH67989.1"/>
    <property type="molecule type" value="mRNA"/>
</dbReference>
<dbReference type="RefSeq" id="NP_998843.1">
    <property type="nucleotide sequence ID" value="NM_213678.1"/>
</dbReference>
<dbReference type="SMR" id="Q6NVL6"/>
<dbReference type="STRING" id="8364.ENSXETP00000015633"/>
<dbReference type="PaxDb" id="8364-ENSXETP00000003595"/>
<dbReference type="DNASU" id="407886"/>
<dbReference type="GeneID" id="407886"/>
<dbReference type="KEGG" id="xtr:407886"/>
<dbReference type="AGR" id="Xenbase:XB-GENE-493239"/>
<dbReference type="CTD" id="8861"/>
<dbReference type="Xenbase" id="XB-GENE-493239">
    <property type="gene designation" value="ldb1"/>
</dbReference>
<dbReference type="eggNOG" id="KOG2181">
    <property type="taxonomic scope" value="Eukaryota"/>
</dbReference>
<dbReference type="HOGENOM" id="CLU_032597_0_0_1"/>
<dbReference type="InParanoid" id="Q6NVL6"/>
<dbReference type="OrthoDB" id="774557at2759"/>
<dbReference type="Proteomes" id="UP000008143">
    <property type="component" value="Chromosome 7"/>
</dbReference>
<dbReference type="GO" id="GO:0005634">
    <property type="term" value="C:nucleus"/>
    <property type="evidence" value="ECO:0000250"/>
    <property type="project" value="UniProtKB"/>
</dbReference>
<dbReference type="GO" id="GO:0030274">
    <property type="term" value="F:LIM domain binding"/>
    <property type="evidence" value="ECO:0000250"/>
    <property type="project" value="UniProtKB"/>
</dbReference>
<dbReference type="GO" id="GO:0042803">
    <property type="term" value="F:protein homodimerization activity"/>
    <property type="evidence" value="ECO:0000250"/>
    <property type="project" value="UniProtKB"/>
</dbReference>
<dbReference type="GO" id="GO:0045893">
    <property type="term" value="P:positive regulation of DNA-templated transcription"/>
    <property type="evidence" value="ECO:0000250"/>
    <property type="project" value="UniProtKB"/>
</dbReference>
<dbReference type="GO" id="GO:0045944">
    <property type="term" value="P:positive regulation of transcription by RNA polymerase II"/>
    <property type="evidence" value="ECO:0000250"/>
    <property type="project" value="UniProtKB"/>
</dbReference>
<dbReference type="FunFam" id="2.10.110.10:FF:000063">
    <property type="entry name" value="LIM domain-binding protein 2 isoform X2"/>
    <property type="match status" value="1"/>
</dbReference>
<dbReference type="Gene3D" id="2.10.110.10">
    <property type="entry name" value="Cysteine Rich Protein"/>
    <property type="match status" value="1"/>
</dbReference>
<dbReference type="InterPro" id="IPR041363">
    <property type="entry name" value="LID"/>
</dbReference>
<dbReference type="InterPro" id="IPR029005">
    <property type="entry name" value="LIM-bd/SEUSS"/>
</dbReference>
<dbReference type="PANTHER" id="PTHR10378">
    <property type="entry name" value="LIM DOMAIN-BINDING PROTEIN"/>
    <property type="match status" value="1"/>
</dbReference>
<dbReference type="Pfam" id="PF17916">
    <property type="entry name" value="LID"/>
    <property type="match status" value="1"/>
</dbReference>
<dbReference type="Pfam" id="PF01803">
    <property type="entry name" value="LIM_bind"/>
    <property type="match status" value="1"/>
</dbReference>
<dbReference type="PROSITE" id="PS51957">
    <property type="entry name" value="LID"/>
    <property type="match status" value="1"/>
</dbReference>
<keyword id="KW-0217">Developmental protein</keyword>
<keyword id="KW-0539">Nucleus</keyword>
<keyword id="KW-1185">Reference proteome</keyword>
<proteinExistence type="evidence at transcript level"/>